<accession>B2UCY7</accession>
<reference key="1">
    <citation type="submission" date="2008-05" db="EMBL/GenBank/DDBJ databases">
        <title>Complete sequence of chromosome 1 of Ralstonia pickettii 12J.</title>
        <authorList>
            <person name="Lucas S."/>
            <person name="Copeland A."/>
            <person name="Lapidus A."/>
            <person name="Glavina del Rio T."/>
            <person name="Dalin E."/>
            <person name="Tice H."/>
            <person name="Bruce D."/>
            <person name="Goodwin L."/>
            <person name="Pitluck S."/>
            <person name="Meincke L."/>
            <person name="Brettin T."/>
            <person name="Detter J.C."/>
            <person name="Han C."/>
            <person name="Kuske C.R."/>
            <person name="Schmutz J."/>
            <person name="Larimer F."/>
            <person name="Land M."/>
            <person name="Hauser L."/>
            <person name="Kyrpides N."/>
            <person name="Mikhailova N."/>
            <person name="Marsh T."/>
            <person name="Richardson P."/>
        </authorList>
    </citation>
    <scope>NUCLEOTIDE SEQUENCE [LARGE SCALE GENOMIC DNA]</scope>
    <source>
        <strain>12J</strain>
    </source>
</reference>
<name>COQ7_RALPJ</name>
<sequence length="217" mass="23754">MLDRFIPEFDRALRAVAGVTRASRPNPADAVIASAASTNTADNATKLSEADRRHAAGLMRVNHVGEVCAQALYQGQALFARDPAIRTQLDEAAREEEDHLAWCAQRLQELNDRPSLLNPLWYAGAFAIGAVAGRLGDKISLGFVAETERQVEHHLDGHLDTLPEQDTRSRAIVAQMRDDEIRHGDNARQAGGIDLPAPIRQAMRAASRVMTTAAYRI</sequence>
<feature type="chain" id="PRO_1000187056" description="3-demethoxyubiquinol 3-hydroxylase">
    <location>
        <begin position="1"/>
        <end position="217"/>
    </location>
</feature>
<feature type="binding site" evidence="1">
    <location>
        <position position="66"/>
    </location>
    <ligand>
        <name>Fe cation</name>
        <dbReference type="ChEBI" id="CHEBI:24875"/>
        <label>1</label>
    </ligand>
</feature>
<feature type="binding site" evidence="1">
    <location>
        <position position="96"/>
    </location>
    <ligand>
        <name>Fe cation</name>
        <dbReference type="ChEBI" id="CHEBI:24875"/>
        <label>1</label>
    </ligand>
</feature>
<feature type="binding site" evidence="1">
    <location>
        <position position="96"/>
    </location>
    <ligand>
        <name>Fe cation</name>
        <dbReference type="ChEBI" id="CHEBI:24875"/>
        <label>2</label>
    </ligand>
</feature>
<feature type="binding site" evidence="1">
    <location>
        <position position="99"/>
    </location>
    <ligand>
        <name>Fe cation</name>
        <dbReference type="ChEBI" id="CHEBI:24875"/>
        <label>1</label>
    </ligand>
</feature>
<feature type="binding site" evidence="1">
    <location>
        <position position="148"/>
    </location>
    <ligand>
        <name>Fe cation</name>
        <dbReference type="ChEBI" id="CHEBI:24875"/>
        <label>2</label>
    </ligand>
</feature>
<feature type="binding site" evidence="1">
    <location>
        <position position="180"/>
    </location>
    <ligand>
        <name>Fe cation</name>
        <dbReference type="ChEBI" id="CHEBI:24875"/>
        <label>1</label>
    </ligand>
</feature>
<feature type="binding site" evidence="1">
    <location>
        <position position="180"/>
    </location>
    <ligand>
        <name>Fe cation</name>
        <dbReference type="ChEBI" id="CHEBI:24875"/>
        <label>2</label>
    </ligand>
</feature>
<feature type="binding site" evidence="1">
    <location>
        <position position="183"/>
    </location>
    <ligand>
        <name>Fe cation</name>
        <dbReference type="ChEBI" id="CHEBI:24875"/>
        <label>2</label>
    </ligand>
</feature>
<organism>
    <name type="scientific">Ralstonia pickettii (strain 12J)</name>
    <dbReference type="NCBI Taxonomy" id="402626"/>
    <lineage>
        <taxon>Bacteria</taxon>
        <taxon>Pseudomonadati</taxon>
        <taxon>Pseudomonadota</taxon>
        <taxon>Betaproteobacteria</taxon>
        <taxon>Burkholderiales</taxon>
        <taxon>Burkholderiaceae</taxon>
        <taxon>Ralstonia</taxon>
    </lineage>
</organism>
<evidence type="ECO:0000255" key="1">
    <source>
        <dbReference type="HAMAP-Rule" id="MF_01658"/>
    </source>
</evidence>
<proteinExistence type="inferred from homology"/>
<protein>
    <recommendedName>
        <fullName evidence="1">3-demethoxyubiquinol 3-hydroxylase</fullName>
        <shortName evidence="1">DMQ hydroxylase</shortName>
        <ecNumber evidence="1">1.14.99.60</ecNumber>
    </recommendedName>
    <alternativeName>
        <fullName evidence="1">2-nonaprenyl-3-methyl-6-methoxy-1,4-benzoquinol hydroxylase</fullName>
    </alternativeName>
</protein>
<gene>
    <name evidence="1" type="primary">coq7</name>
    <name type="ordered locus">Rpic_3099</name>
</gene>
<keyword id="KW-1003">Cell membrane</keyword>
<keyword id="KW-0408">Iron</keyword>
<keyword id="KW-0472">Membrane</keyword>
<keyword id="KW-0479">Metal-binding</keyword>
<keyword id="KW-0503">Monooxygenase</keyword>
<keyword id="KW-0560">Oxidoreductase</keyword>
<keyword id="KW-0831">Ubiquinone biosynthesis</keyword>
<comment type="function">
    <text evidence="1">Catalyzes the hydroxylation of 2-nonaprenyl-3-methyl-6-methoxy-1,4-benzoquinol during ubiquinone biosynthesis.</text>
</comment>
<comment type="catalytic activity">
    <reaction evidence="1">
        <text>a 5-methoxy-2-methyl-3-(all-trans-polyprenyl)benzene-1,4-diol + AH2 + O2 = a 3-demethylubiquinol + A + H2O</text>
        <dbReference type="Rhea" id="RHEA:50908"/>
        <dbReference type="Rhea" id="RHEA-COMP:10859"/>
        <dbReference type="Rhea" id="RHEA-COMP:10914"/>
        <dbReference type="ChEBI" id="CHEBI:13193"/>
        <dbReference type="ChEBI" id="CHEBI:15377"/>
        <dbReference type="ChEBI" id="CHEBI:15379"/>
        <dbReference type="ChEBI" id="CHEBI:17499"/>
        <dbReference type="ChEBI" id="CHEBI:84167"/>
        <dbReference type="ChEBI" id="CHEBI:84422"/>
        <dbReference type="EC" id="1.14.99.60"/>
    </reaction>
</comment>
<comment type="cofactor">
    <cofactor evidence="1">
        <name>Fe cation</name>
        <dbReference type="ChEBI" id="CHEBI:24875"/>
    </cofactor>
    <text evidence="1">Binds 2 iron ions per subunit.</text>
</comment>
<comment type="pathway">
    <text evidence="1">Cofactor biosynthesis; ubiquinone biosynthesis.</text>
</comment>
<comment type="subcellular location">
    <subcellularLocation>
        <location evidence="1">Cell membrane</location>
        <topology evidence="1">Peripheral membrane protein</topology>
    </subcellularLocation>
</comment>
<comment type="similarity">
    <text evidence="1">Belongs to the COQ7 family.</text>
</comment>
<dbReference type="EC" id="1.14.99.60" evidence="1"/>
<dbReference type="EMBL" id="CP001068">
    <property type="protein sequence ID" value="ACD28222.1"/>
    <property type="molecule type" value="Genomic_DNA"/>
</dbReference>
<dbReference type="SMR" id="B2UCY7"/>
<dbReference type="STRING" id="402626.Rpic_3099"/>
<dbReference type="KEGG" id="rpi:Rpic_3099"/>
<dbReference type="eggNOG" id="COG2941">
    <property type="taxonomic scope" value="Bacteria"/>
</dbReference>
<dbReference type="HOGENOM" id="CLU_088601_0_0_4"/>
<dbReference type="UniPathway" id="UPA00232"/>
<dbReference type="GO" id="GO:0005886">
    <property type="term" value="C:plasma membrane"/>
    <property type="evidence" value="ECO:0007669"/>
    <property type="project" value="UniProtKB-SubCell"/>
</dbReference>
<dbReference type="GO" id="GO:0008682">
    <property type="term" value="F:3-demethoxyubiquinol 3-hydroxylase activity"/>
    <property type="evidence" value="ECO:0007669"/>
    <property type="project" value="UniProtKB-EC"/>
</dbReference>
<dbReference type="GO" id="GO:0046872">
    <property type="term" value="F:metal ion binding"/>
    <property type="evidence" value="ECO:0007669"/>
    <property type="project" value="UniProtKB-KW"/>
</dbReference>
<dbReference type="GO" id="GO:0006744">
    <property type="term" value="P:ubiquinone biosynthetic process"/>
    <property type="evidence" value="ECO:0007669"/>
    <property type="project" value="UniProtKB-UniRule"/>
</dbReference>
<dbReference type="CDD" id="cd01042">
    <property type="entry name" value="DMQH"/>
    <property type="match status" value="1"/>
</dbReference>
<dbReference type="Gene3D" id="1.20.1260.10">
    <property type="match status" value="1"/>
</dbReference>
<dbReference type="HAMAP" id="MF_01658">
    <property type="entry name" value="COQ7"/>
    <property type="match status" value="1"/>
</dbReference>
<dbReference type="InterPro" id="IPR047809">
    <property type="entry name" value="COQ7_proteobact"/>
</dbReference>
<dbReference type="InterPro" id="IPR012347">
    <property type="entry name" value="Ferritin-like"/>
</dbReference>
<dbReference type="InterPro" id="IPR009078">
    <property type="entry name" value="Ferritin-like_SF"/>
</dbReference>
<dbReference type="InterPro" id="IPR011566">
    <property type="entry name" value="Ubq_synth_Coq7"/>
</dbReference>
<dbReference type="NCBIfam" id="NF033656">
    <property type="entry name" value="DMQ_monoox_COQ7"/>
    <property type="match status" value="1"/>
</dbReference>
<dbReference type="PANTHER" id="PTHR11237:SF4">
    <property type="entry name" value="5-DEMETHOXYUBIQUINONE HYDROXYLASE, MITOCHONDRIAL"/>
    <property type="match status" value="1"/>
</dbReference>
<dbReference type="PANTHER" id="PTHR11237">
    <property type="entry name" value="COENZYME Q10 BIOSYNTHESIS PROTEIN 7"/>
    <property type="match status" value="1"/>
</dbReference>
<dbReference type="Pfam" id="PF03232">
    <property type="entry name" value="COQ7"/>
    <property type="match status" value="1"/>
</dbReference>
<dbReference type="SUPFAM" id="SSF47240">
    <property type="entry name" value="Ferritin-like"/>
    <property type="match status" value="1"/>
</dbReference>